<name>SYS_ACIAD</name>
<protein>
    <recommendedName>
        <fullName evidence="1">Serine--tRNA ligase</fullName>
        <ecNumber evidence="1">6.1.1.11</ecNumber>
    </recommendedName>
    <alternativeName>
        <fullName evidence="1">Seryl-tRNA synthetase</fullName>
        <shortName evidence="1">SerRS</shortName>
    </alternativeName>
    <alternativeName>
        <fullName evidence="1">Seryl-tRNA(Ser/Sec) synthetase</fullName>
    </alternativeName>
</protein>
<gene>
    <name evidence="1" type="primary">serS</name>
    <name type="ordered locus">ACIAD2935</name>
</gene>
<accession>Q6F8G5</accession>
<evidence type="ECO:0000255" key="1">
    <source>
        <dbReference type="HAMAP-Rule" id="MF_00176"/>
    </source>
</evidence>
<evidence type="ECO:0000305" key="2"/>
<reference key="1">
    <citation type="journal article" date="2004" name="Nucleic Acids Res.">
        <title>Unique features revealed by the genome sequence of Acinetobacter sp. ADP1, a versatile and naturally transformation competent bacterium.</title>
        <authorList>
            <person name="Barbe V."/>
            <person name="Vallenet D."/>
            <person name="Fonknechten N."/>
            <person name="Kreimeyer A."/>
            <person name="Oztas S."/>
            <person name="Labarre L."/>
            <person name="Cruveiller S."/>
            <person name="Robert C."/>
            <person name="Duprat S."/>
            <person name="Wincker P."/>
            <person name="Ornston L.N."/>
            <person name="Weissenbach J."/>
            <person name="Marliere P."/>
            <person name="Cohen G.N."/>
            <person name="Medigue C."/>
        </authorList>
    </citation>
    <scope>NUCLEOTIDE SEQUENCE [LARGE SCALE GENOMIC DNA]</scope>
    <source>
        <strain>ATCC 33305 / BD413 / ADP1</strain>
    </source>
</reference>
<keyword id="KW-0030">Aminoacyl-tRNA synthetase</keyword>
<keyword id="KW-0067">ATP-binding</keyword>
<keyword id="KW-0963">Cytoplasm</keyword>
<keyword id="KW-0436">Ligase</keyword>
<keyword id="KW-0547">Nucleotide-binding</keyword>
<keyword id="KW-0648">Protein biosynthesis</keyword>
<organism>
    <name type="scientific">Acinetobacter baylyi (strain ATCC 33305 / BD413 / ADP1)</name>
    <dbReference type="NCBI Taxonomy" id="62977"/>
    <lineage>
        <taxon>Bacteria</taxon>
        <taxon>Pseudomonadati</taxon>
        <taxon>Pseudomonadota</taxon>
        <taxon>Gammaproteobacteria</taxon>
        <taxon>Moraxellales</taxon>
        <taxon>Moraxellaceae</taxon>
        <taxon>Acinetobacter</taxon>
    </lineage>
</organism>
<feature type="chain" id="PRO_0000121991" description="Serine--tRNA ligase">
    <location>
        <begin position="1"/>
        <end position="423"/>
    </location>
</feature>
<feature type="binding site" evidence="1">
    <location>
        <begin position="231"/>
        <end position="233"/>
    </location>
    <ligand>
        <name>L-serine</name>
        <dbReference type="ChEBI" id="CHEBI:33384"/>
    </ligand>
</feature>
<feature type="binding site" evidence="1">
    <location>
        <begin position="262"/>
        <end position="264"/>
    </location>
    <ligand>
        <name>ATP</name>
        <dbReference type="ChEBI" id="CHEBI:30616"/>
    </ligand>
</feature>
<feature type="binding site" evidence="1">
    <location>
        <position position="285"/>
    </location>
    <ligand>
        <name>L-serine</name>
        <dbReference type="ChEBI" id="CHEBI:33384"/>
    </ligand>
</feature>
<feature type="binding site" evidence="1">
    <location>
        <begin position="349"/>
        <end position="352"/>
    </location>
    <ligand>
        <name>ATP</name>
        <dbReference type="ChEBI" id="CHEBI:30616"/>
    </ligand>
</feature>
<feature type="binding site" evidence="1">
    <location>
        <position position="384"/>
    </location>
    <ligand>
        <name>L-serine</name>
        <dbReference type="ChEBI" id="CHEBI:33384"/>
    </ligand>
</feature>
<proteinExistence type="inferred from homology"/>
<sequence>MIDPKLLRNNIEAVNLALAKRGVQLDPTEWASLEVRRKELQSKTESLQAERNAGAKQVGQIKKAGGDASEIMTRMQAIGDEIKAAEVALAELQAEIEQKALSIPNLPDESVPEGKDENDNVEISKWGTPRQFDFEIKDHTDLGEWMGGLEFETATKLTGSRFSVLKGPLARLQRALTQFMLDTHTLKNGYTEAYVPYLVNADSLRGTGQLPKFEEDLFKLQGEKEYYLIPTAEVPVTNFVRDEIIDAERLPLKYAAHTPCFRSEAGSYGRDTRGLIRQHQFDKVEMVQIVKPEDSMQALEELTGHAEGILQALGLPYRKILLCGGDMGFGSTKTYDLEVWVPSQNTYREISSCSNMGDFQARRMMARYRTDQKKTELVHTLNGSGLAVGRTLLAVMENYQRADGAIEVPEVLRPYMGGATYID</sequence>
<comment type="function">
    <text evidence="1">Catalyzes the attachment of serine to tRNA(Ser). Is also able to aminoacylate tRNA(Sec) with serine, to form the misacylated tRNA L-seryl-tRNA(Sec), which will be further converted into selenocysteinyl-tRNA(Sec).</text>
</comment>
<comment type="catalytic activity">
    <reaction evidence="1">
        <text>tRNA(Ser) + L-serine + ATP = L-seryl-tRNA(Ser) + AMP + diphosphate + H(+)</text>
        <dbReference type="Rhea" id="RHEA:12292"/>
        <dbReference type="Rhea" id="RHEA-COMP:9669"/>
        <dbReference type="Rhea" id="RHEA-COMP:9703"/>
        <dbReference type="ChEBI" id="CHEBI:15378"/>
        <dbReference type="ChEBI" id="CHEBI:30616"/>
        <dbReference type="ChEBI" id="CHEBI:33019"/>
        <dbReference type="ChEBI" id="CHEBI:33384"/>
        <dbReference type="ChEBI" id="CHEBI:78442"/>
        <dbReference type="ChEBI" id="CHEBI:78533"/>
        <dbReference type="ChEBI" id="CHEBI:456215"/>
        <dbReference type="EC" id="6.1.1.11"/>
    </reaction>
</comment>
<comment type="catalytic activity">
    <reaction evidence="1">
        <text>tRNA(Sec) + L-serine + ATP = L-seryl-tRNA(Sec) + AMP + diphosphate + H(+)</text>
        <dbReference type="Rhea" id="RHEA:42580"/>
        <dbReference type="Rhea" id="RHEA-COMP:9742"/>
        <dbReference type="Rhea" id="RHEA-COMP:10128"/>
        <dbReference type="ChEBI" id="CHEBI:15378"/>
        <dbReference type="ChEBI" id="CHEBI:30616"/>
        <dbReference type="ChEBI" id="CHEBI:33019"/>
        <dbReference type="ChEBI" id="CHEBI:33384"/>
        <dbReference type="ChEBI" id="CHEBI:78442"/>
        <dbReference type="ChEBI" id="CHEBI:78533"/>
        <dbReference type="ChEBI" id="CHEBI:456215"/>
        <dbReference type="EC" id="6.1.1.11"/>
    </reaction>
</comment>
<comment type="pathway">
    <text evidence="1">Aminoacyl-tRNA biosynthesis; selenocysteinyl-tRNA(Sec) biosynthesis; L-seryl-tRNA(Sec) from L-serine and tRNA(Sec): step 1/1.</text>
</comment>
<comment type="subunit">
    <text evidence="1">Homodimer. The tRNA molecule binds across the dimer.</text>
</comment>
<comment type="subcellular location">
    <subcellularLocation>
        <location evidence="1">Cytoplasm</location>
    </subcellularLocation>
</comment>
<comment type="domain">
    <text evidence="1">Consists of two distinct domains, a catalytic core and a N-terminal extension that is involved in tRNA binding.</text>
</comment>
<comment type="similarity">
    <text evidence="1">Belongs to the class-II aminoacyl-tRNA synthetase family. Type-1 seryl-tRNA synthetase subfamily.</text>
</comment>
<comment type="sequence caution" evidence="2">
    <conflict type="erroneous initiation">
        <sequence resource="EMBL-CDS" id="CAG69650"/>
    </conflict>
</comment>
<dbReference type="EC" id="6.1.1.11" evidence="1"/>
<dbReference type="EMBL" id="CR543861">
    <property type="protein sequence ID" value="CAG69650.1"/>
    <property type="status" value="ALT_INIT"/>
    <property type="molecule type" value="Genomic_DNA"/>
</dbReference>
<dbReference type="RefSeq" id="WP_004929512.1">
    <property type="nucleotide sequence ID" value="NC_005966.1"/>
</dbReference>
<dbReference type="SMR" id="Q6F8G5"/>
<dbReference type="STRING" id="202950.GCA_001485005_02875"/>
<dbReference type="GeneID" id="45235165"/>
<dbReference type="KEGG" id="aci:ACIAD2935"/>
<dbReference type="eggNOG" id="COG0172">
    <property type="taxonomic scope" value="Bacteria"/>
</dbReference>
<dbReference type="HOGENOM" id="CLU_023797_1_1_6"/>
<dbReference type="OrthoDB" id="9804647at2"/>
<dbReference type="BioCyc" id="ASP62977:ACIAD_RS13250-MONOMER"/>
<dbReference type="UniPathway" id="UPA00906">
    <property type="reaction ID" value="UER00895"/>
</dbReference>
<dbReference type="Proteomes" id="UP000000430">
    <property type="component" value="Chromosome"/>
</dbReference>
<dbReference type="GO" id="GO:0005737">
    <property type="term" value="C:cytoplasm"/>
    <property type="evidence" value="ECO:0007669"/>
    <property type="project" value="UniProtKB-SubCell"/>
</dbReference>
<dbReference type="GO" id="GO:0005524">
    <property type="term" value="F:ATP binding"/>
    <property type="evidence" value="ECO:0007669"/>
    <property type="project" value="UniProtKB-UniRule"/>
</dbReference>
<dbReference type="GO" id="GO:0004828">
    <property type="term" value="F:serine-tRNA ligase activity"/>
    <property type="evidence" value="ECO:0007669"/>
    <property type="project" value="UniProtKB-UniRule"/>
</dbReference>
<dbReference type="GO" id="GO:0016260">
    <property type="term" value="P:selenocysteine biosynthetic process"/>
    <property type="evidence" value="ECO:0007669"/>
    <property type="project" value="UniProtKB-UniRule"/>
</dbReference>
<dbReference type="GO" id="GO:0006434">
    <property type="term" value="P:seryl-tRNA aminoacylation"/>
    <property type="evidence" value="ECO:0007669"/>
    <property type="project" value="UniProtKB-UniRule"/>
</dbReference>
<dbReference type="CDD" id="cd00770">
    <property type="entry name" value="SerRS_core"/>
    <property type="match status" value="1"/>
</dbReference>
<dbReference type="Gene3D" id="3.30.930.10">
    <property type="entry name" value="Bira Bifunctional Protein, Domain 2"/>
    <property type="match status" value="1"/>
</dbReference>
<dbReference type="Gene3D" id="1.10.287.40">
    <property type="entry name" value="Serine-tRNA synthetase, tRNA binding domain"/>
    <property type="match status" value="1"/>
</dbReference>
<dbReference type="HAMAP" id="MF_00176">
    <property type="entry name" value="Ser_tRNA_synth_type1"/>
    <property type="match status" value="1"/>
</dbReference>
<dbReference type="InterPro" id="IPR002314">
    <property type="entry name" value="aa-tRNA-synt_IIb"/>
</dbReference>
<dbReference type="InterPro" id="IPR006195">
    <property type="entry name" value="aa-tRNA-synth_II"/>
</dbReference>
<dbReference type="InterPro" id="IPR045864">
    <property type="entry name" value="aa-tRNA-synth_II/BPL/LPL"/>
</dbReference>
<dbReference type="InterPro" id="IPR002317">
    <property type="entry name" value="Ser-tRNA-ligase_type_1"/>
</dbReference>
<dbReference type="InterPro" id="IPR015866">
    <property type="entry name" value="Ser-tRNA-synth_1_N"/>
</dbReference>
<dbReference type="InterPro" id="IPR042103">
    <property type="entry name" value="SerRS_1_N_sf"/>
</dbReference>
<dbReference type="InterPro" id="IPR033729">
    <property type="entry name" value="SerRS_core"/>
</dbReference>
<dbReference type="InterPro" id="IPR010978">
    <property type="entry name" value="tRNA-bd_arm"/>
</dbReference>
<dbReference type="NCBIfam" id="TIGR00414">
    <property type="entry name" value="serS"/>
    <property type="match status" value="1"/>
</dbReference>
<dbReference type="PANTHER" id="PTHR43697:SF1">
    <property type="entry name" value="SERINE--TRNA LIGASE"/>
    <property type="match status" value="1"/>
</dbReference>
<dbReference type="PANTHER" id="PTHR43697">
    <property type="entry name" value="SERYL-TRNA SYNTHETASE"/>
    <property type="match status" value="1"/>
</dbReference>
<dbReference type="Pfam" id="PF02403">
    <property type="entry name" value="Seryl_tRNA_N"/>
    <property type="match status" value="1"/>
</dbReference>
<dbReference type="Pfam" id="PF00587">
    <property type="entry name" value="tRNA-synt_2b"/>
    <property type="match status" value="1"/>
</dbReference>
<dbReference type="PIRSF" id="PIRSF001529">
    <property type="entry name" value="Ser-tRNA-synth_IIa"/>
    <property type="match status" value="1"/>
</dbReference>
<dbReference type="PRINTS" id="PR00981">
    <property type="entry name" value="TRNASYNTHSER"/>
</dbReference>
<dbReference type="SUPFAM" id="SSF55681">
    <property type="entry name" value="Class II aaRS and biotin synthetases"/>
    <property type="match status" value="1"/>
</dbReference>
<dbReference type="SUPFAM" id="SSF46589">
    <property type="entry name" value="tRNA-binding arm"/>
    <property type="match status" value="1"/>
</dbReference>
<dbReference type="PROSITE" id="PS50862">
    <property type="entry name" value="AA_TRNA_LIGASE_II"/>
    <property type="match status" value="1"/>
</dbReference>